<protein>
    <recommendedName>
        <fullName evidence="1">Lipoprotein signal peptidase</fullName>
        <ecNumber evidence="1">3.4.23.36</ecNumber>
    </recommendedName>
    <alternativeName>
        <fullName evidence="1">Prolipoprotein signal peptidase</fullName>
    </alternativeName>
    <alternativeName>
        <fullName evidence="1">Signal peptidase II</fullName>
        <shortName evidence="1">SPase II</shortName>
    </alternativeName>
</protein>
<reference key="1">
    <citation type="journal article" date="2005" name="Nat. Genet.">
        <title>The complete genome sequence of Francisella tularensis, the causative agent of tularemia.</title>
        <authorList>
            <person name="Larsson P."/>
            <person name="Oyston P.C.F."/>
            <person name="Chain P."/>
            <person name="Chu M.C."/>
            <person name="Duffield M."/>
            <person name="Fuxelius H.-H."/>
            <person name="Garcia E."/>
            <person name="Haelltorp G."/>
            <person name="Johansson D."/>
            <person name="Isherwood K.E."/>
            <person name="Karp P.D."/>
            <person name="Larsson E."/>
            <person name="Liu Y."/>
            <person name="Michell S."/>
            <person name="Prior J."/>
            <person name="Prior R."/>
            <person name="Malfatti S."/>
            <person name="Sjoestedt A."/>
            <person name="Svensson K."/>
            <person name="Thompson N."/>
            <person name="Vergez L."/>
            <person name="Wagg J.K."/>
            <person name="Wren B.W."/>
            <person name="Lindler L.E."/>
            <person name="Andersson S.G.E."/>
            <person name="Forsman M."/>
            <person name="Titball R.W."/>
        </authorList>
    </citation>
    <scope>NUCLEOTIDE SEQUENCE [LARGE SCALE GENOMIC DNA]</scope>
    <source>
        <strain>SCHU S4 / Schu 4</strain>
    </source>
</reference>
<dbReference type="EC" id="3.4.23.36" evidence="1"/>
<dbReference type="EMBL" id="AJ749949">
    <property type="protein sequence ID" value="CAG45547.1"/>
    <property type="molecule type" value="Genomic_DNA"/>
</dbReference>
<dbReference type="RefSeq" id="WP_003014705.1">
    <property type="nucleotide sequence ID" value="NZ_CP010290.1"/>
</dbReference>
<dbReference type="RefSeq" id="YP_169911.1">
    <property type="nucleotide sequence ID" value="NC_006570.2"/>
</dbReference>
<dbReference type="SMR" id="Q5NGD1"/>
<dbReference type="STRING" id="177416.FTT_0914c"/>
<dbReference type="DNASU" id="3190811"/>
<dbReference type="EnsemblBacteria" id="CAG45547">
    <property type="protein sequence ID" value="CAG45547"/>
    <property type="gene ID" value="FTT_0914c"/>
</dbReference>
<dbReference type="KEGG" id="ftu:FTT_0914c"/>
<dbReference type="eggNOG" id="COG0597">
    <property type="taxonomic scope" value="Bacteria"/>
</dbReference>
<dbReference type="OrthoDB" id="9810259at2"/>
<dbReference type="UniPathway" id="UPA00665"/>
<dbReference type="Proteomes" id="UP000001174">
    <property type="component" value="Chromosome"/>
</dbReference>
<dbReference type="GO" id="GO:0005886">
    <property type="term" value="C:plasma membrane"/>
    <property type="evidence" value="ECO:0007669"/>
    <property type="project" value="UniProtKB-SubCell"/>
</dbReference>
<dbReference type="GO" id="GO:0004190">
    <property type="term" value="F:aspartic-type endopeptidase activity"/>
    <property type="evidence" value="ECO:0007669"/>
    <property type="project" value="UniProtKB-UniRule"/>
</dbReference>
<dbReference type="GO" id="GO:0006508">
    <property type="term" value="P:proteolysis"/>
    <property type="evidence" value="ECO:0007669"/>
    <property type="project" value="UniProtKB-KW"/>
</dbReference>
<dbReference type="HAMAP" id="MF_00161">
    <property type="entry name" value="LspA"/>
    <property type="match status" value="1"/>
</dbReference>
<dbReference type="InterPro" id="IPR001872">
    <property type="entry name" value="Peptidase_A8"/>
</dbReference>
<dbReference type="NCBIfam" id="TIGR00077">
    <property type="entry name" value="lspA"/>
    <property type="match status" value="1"/>
</dbReference>
<dbReference type="PANTHER" id="PTHR33695">
    <property type="entry name" value="LIPOPROTEIN SIGNAL PEPTIDASE"/>
    <property type="match status" value="1"/>
</dbReference>
<dbReference type="PANTHER" id="PTHR33695:SF1">
    <property type="entry name" value="LIPOPROTEIN SIGNAL PEPTIDASE"/>
    <property type="match status" value="1"/>
</dbReference>
<dbReference type="Pfam" id="PF01252">
    <property type="entry name" value="Peptidase_A8"/>
    <property type="match status" value="1"/>
</dbReference>
<dbReference type="PRINTS" id="PR00781">
    <property type="entry name" value="LIPOSIGPTASE"/>
</dbReference>
<dbReference type="PROSITE" id="PS00855">
    <property type="entry name" value="SPASE_II"/>
    <property type="match status" value="1"/>
</dbReference>
<comment type="function">
    <text evidence="1">This protein specifically catalyzes the removal of signal peptides from prolipoproteins.</text>
</comment>
<comment type="catalytic activity">
    <reaction evidence="1">
        <text>Release of signal peptides from bacterial membrane prolipoproteins. Hydrolyzes -Xaa-Yaa-Zaa-|-(S,diacylglyceryl)Cys-, in which Xaa is hydrophobic (preferably Leu), and Yaa (Ala or Ser) and Zaa (Gly or Ala) have small, neutral side chains.</text>
        <dbReference type="EC" id="3.4.23.36"/>
    </reaction>
</comment>
<comment type="pathway">
    <text evidence="1">Protein modification; lipoprotein biosynthesis (signal peptide cleavage).</text>
</comment>
<comment type="subcellular location">
    <subcellularLocation>
        <location evidence="1">Cell inner membrane</location>
        <topology evidence="1">Multi-pass membrane protein</topology>
    </subcellularLocation>
</comment>
<comment type="similarity">
    <text evidence="1">Belongs to the peptidase A8 family.</text>
</comment>
<accession>Q5NGD1</accession>
<keyword id="KW-0064">Aspartyl protease</keyword>
<keyword id="KW-0997">Cell inner membrane</keyword>
<keyword id="KW-1003">Cell membrane</keyword>
<keyword id="KW-0378">Hydrolase</keyword>
<keyword id="KW-0472">Membrane</keyword>
<keyword id="KW-0645">Protease</keyword>
<keyword id="KW-1185">Reference proteome</keyword>
<keyword id="KW-0812">Transmembrane</keyword>
<keyword id="KW-1133">Transmembrane helix</keyword>
<gene>
    <name evidence="1" type="primary">lspA</name>
    <name type="ordered locus">FTT_0914c</name>
</gene>
<feature type="chain" id="PRO_0000289382" description="Lipoprotein signal peptidase">
    <location>
        <begin position="1"/>
        <end position="161"/>
    </location>
</feature>
<feature type="transmembrane region" description="Helical" evidence="1">
    <location>
        <begin position="8"/>
        <end position="28"/>
    </location>
</feature>
<feature type="transmembrane region" description="Helical" evidence="1">
    <location>
        <begin position="40"/>
        <end position="60"/>
    </location>
</feature>
<feature type="transmembrane region" description="Helical" evidence="1">
    <location>
        <begin position="67"/>
        <end position="87"/>
    </location>
</feature>
<feature type="transmembrane region" description="Helical" evidence="1">
    <location>
        <begin position="91"/>
        <end position="111"/>
    </location>
</feature>
<feature type="transmembrane region" description="Helical" evidence="1">
    <location>
        <begin position="136"/>
        <end position="156"/>
    </location>
</feature>
<feature type="active site" evidence="1">
    <location>
        <position position="122"/>
    </location>
</feature>
<feature type="active site" evidence="1">
    <location>
        <position position="140"/>
    </location>
</feature>
<proteinExistence type="inferred from homology"/>
<evidence type="ECO:0000255" key="1">
    <source>
        <dbReference type="HAMAP-Rule" id="MF_00161"/>
    </source>
</evidence>
<organism>
    <name type="scientific">Francisella tularensis subsp. tularensis (strain SCHU S4 / Schu 4)</name>
    <dbReference type="NCBI Taxonomy" id="177416"/>
    <lineage>
        <taxon>Bacteria</taxon>
        <taxon>Pseudomonadati</taxon>
        <taxon>Pseudomonadota</taxon>
        <taxon>Gammaproteobacteria</taxon>
        <taxon>Thiotrichales</taxon>
        <taxon>Francisellaceae</taxon>
        <taxon>Francisella</taxon>
    </lineage>
</organism>
<sequence>MNLLRPKLKYFILAILIIAADLYTKYLANTYLEFAQSLKITSFFNLTLLYNHGAAFSLLSNDQTSWQMIMFSTISLIAAIVLIYLIIKQPITEKINLFSFALILGGALGNFYDRAFQGYVIDFLDFHIGNYHWPSFNIADSAITCGVVILIAASLFTKKKS</sequence>
<name>LSPA_FRATT</name>